<feature type="chain" id="PRO_1000056078" description="Large ribosomal subunit protein uL30">
    <location>
        <begin position="1"/>
        <end position="59"/>
    </location>
</feature>
<keyword id="KW-0687">Ribonucleoprotein</keyword>
<keyword id="KW-0689">Ribosomal protein</keyword>
<name>RL30_MYCVP</name>
<accession>A1T4S4</accession>
<comment type="subunit">
    <text evidence="1">Part of the 50S ribosomal subunit.</text>
</comment>
<comment type="similarity">
    <text evidence="1">Belongs to the universal ribosomal protein uL30 family.</text>
</comment>
<reference key="1">
    <citation type="submission" date="2006-12" db="EMBL/GenBank/DDBJ databases">
        <title>Complete sequence of Mycobacterium vanbaalenii PYR-1.</title>
        <authorList>
            <consortium name="US DOE Joint Genome Institute"/>
            <person name="Copeland A."/>
            <person name="Lucas S."/>
            <person name="Lapidus A."/>
            <person name="Barry K."/>
            <person name="Detter J.C."/>
            <person name="Glavina del Rio T."/>
            <person name="Hammon N."/>
            <person name="Israni S."/>
            <person name="Dalin E."/>
            <person name="Tice H."/>
            <person name="Pitluck S."/>
            <person name="Singan V."/>
            <person name="Schmutz J."/>
            <person name="Larimer F."/>
            <person name="Land M."/>
            <person name="Hauser L."/>
            <person name="Kyrpides N."/>
            <person name="Anderson I.J."/>
            <person name="Miller C."/>
            <person name="Richardson P."/>
        </authorList>
    </citation>
    <scope>NUCLEOTIDE SEQUENCE [LARGE SCALE GENOMIC DNA]</scope>
    <source>
        <strain>DSM 7251 / JCM 13017 / BCRC 16820 / KCTC 9966 / NRRL B-24157 / PYR-1</strain>
    </source>
</reference>
<gene>
    <name evidence="1" type="primary">rpmD</name>
    <name type="ordered locus">Mvan_1340</name>
</gene>
<organism>
    <name type="scientific">Mycolicibacterium vanbaalenii (strain DSM 7251 / JCM 13017 / BCRC 16820 / KCTC 9966 / NRRL B-24157 / PYR-1)</name>
    <name type="common">Mycobacterium vanbaalenii</name>
    <dbReference type="NCBI Taxonomy" id="350058"/>
    <lineage>
        <taxon>Bacteria</taxon>
        <taxon>Bacillati</taxon>
        <taxon>Actinomycetota</taxon>
        <taxon>Actinomycetes</taxon>
        <taxon>Mycobacteriales</taxon>
        <taxon>Mycobacteriaceae</taxon>
        <taxon>Mycolicibacterium</taxon>
    </lineage>
</organism>
<proteinExistence type="inferred from homology"/>
<dbReference type="EMBL" id="CP000511">
    <property type="protein sequence ID" value="ABM12174.1"/>
    <property type="molecule type" value="Genomic_DNA"/>
</dbReference>
<dbReference type="RefSeq" id="WP_003929541.1">
    <property type="nucleotide sequence ID" value="NZ_JACKSD010000069.1"/>
</dbReference>
<dbReference type="SMR" id="A1T4S4"/>
<dbReference type="STRING" id="350058.Mvan_1340"/>
<dbReference type="KEGG" id="mva:Mvan_1340"/>
<dbReference type="eggNOG" id="COG1841">
    <property type="taxonomic scope" value="Bacteria"/>
</dbReference>
<dbReference type="HOGENOM" id="CLU_131047_2_1_11"/>
<dbReference type="Proteomes" id="UP000009159">
    <property type="component" value="Chromosome"/>
</dbReference>
<dbReference type="GO" id="GO:0022625">
    <property type="term" value="C:cytosolic large ribosomal subunit"/>
    <property type="evidence" value="ECO:0007669"/>
    <property type="project" value="TreeGrafter"/>
</dbReference>
<dbReference type="GO" id="GO:0003735">
    <property type="term" value="F:structural constituent of ribosome"/>
    <property type="evidence" value="ECO:0007669"/>
    <property type="project" value="InterPro"/>
</dbReference>
<dbReference type="GO" id="GO:0006412">
    <property type="term" value="P:translation"/>
    <property type="evidence" value="ECO:0007669"/>
    <property type="project" value="UniProtKB-UniRule"/>
</dbReference>
<dbReference type="CDD" id="cd01658">
    <property type="entry name" value="Ribosomal_L30"/>
    <property type="match status" value="1"/>
</dbReference>
<dbReference type="FunFam" id="3.30.1390.20:FF:000001">
    <property type="entry name" value="50S ribosomal protein L30"/>
    <property type="match status" value="1"/>
</dbReference>
<dbReference type="Gene3D" id="3.30.1390.20">
    <property type="entry name" value="Ribosomal protein L30, ferredoxin-like fold domain"/>
    <property type="match status" value="1"/>
</dbReference>
<dbReference type="HAMAP" id="MF_01371_B">
    <property type="entry name" value="Ribosomal_uL30_B"/>
    <property type="match status" value="1"/>
</dbReference>
<dbReference type="InterPro" id="IPR036919">
    <property type="entry name" value="Ribo_uL30_ferredoxin-like_sf"/>
</dbReference>
<dbReference type="InterPro" id="IPR005996">
    <property type="entry name" value="Ribosomal_uL30_bac-type"/>
</dbReference>
<dbReference type="InterPro" id="IPR018038">
    <property type="entry name" value="Ribosomal_uL30_CS"/>
</dbReference>
<dbReference type="InterPro" id="IPR016082">
    <property type="entry name" value="Ribosomal_uL30_ferredoxin-like"/>
</dbReference>
<dbReference type="NCBIfam" id="TIGR01308">
    <property type="entry name" value="rpmD_bact"/>
    <property type="match status" value="1"/>
</dbReference>
<dbReference type="PANTHER" id="PTHR15892:SF2">
    <property type="entry name" value="LARGE RIBOSOMAL SUBUNIT PROTEIN UL30M"/>
    <property type="match status" value="1"/>
</dbReference>
<dbReference type="PANTHER" id="PTHR15892">
    <property type="entry name" value="MITOCHONDRIAL RIBOSOMAL PROTEIN L30"/>
    <property type="match status" value="1"/>
</dbReference>
<dbReference type="Pfam" id="PF00327">
    <property type="entry name" value="Ribosomal_L30"/>
    <property type="match status" value="1"/>
</dbReference>
<dbReference type="PIRSF" id="PIRSF002211">
    <property type="entry name" value="Ribosomal_L30_bac-type"/>
    <property type="match status" value="1"/>
</dbReference>
<dbReference type="SUPFAM" id="SSF55129">
    <property type="entry name" value="Ribosomal protein L30p/L7e"/>
    <property type="match status" value="1"/>
</dbReference>
<dbReference type="PROSITE" id="PS00634">
    <property type="entry name" value="RIBOSOMAL_L30"/>
    <property type="match status" value="1"/>
</dbReference>
<protein>
    <recommendedName>
        <fullName evidence="1">Large ribosomal subunit protein uL30</fullName>
    </recommendedName>
    <alternativeName>
        <fullName evidence="2">50S ribosomal protein L30</fullName>
    </alternativeName>
</protein>
<evidence type="ECO:0000255" key="1">
    <source>
        <dbReference type="HAMAP-Rule" id="MF_01371"/>
    </source>
</evidence>
<evidence type="ECO:0000305" key="2"/>
<sequence>MAELKITQVRSTIGARWKQRESLRTLGLRKIRQSVVREDNAQTRGLIKTVHHLVTVEEV</sequence>